<protein>
    <recommendedName>
        <fullName>Putative protein HokG</fullName>
    </recommendedName>
</protein>
<comment type="function">
    <text evidence="1">Toxic component of a type I toxin-antitoxin (TA) system (By similarity). When overexpressed kills cells within minutes; causes collapse of the transmembrane potential and arrest of respiration (By similarity). Its toxic effect is probably neutralized by an antisense antitoxin Sok RNA (By similarity).</text>
</comment>
<comment type="subcellular location">
    <subcellularLocation>
        <location evidence="1">Cell inner membrane</location>
        <topology evidence="3">Single-pass membrane protein</topology>
    </subcellularLocation>
</comment>
<comment type="similarity">
    <text evidence="3">Belongs to the Hok/Gef family.</text>
</comment>
<name>HOKG_ECO57</name>
<evidence type="ECO:0000250" key="1">
    <source>
        <dbReference type="UniProtKB" id="P0ACG4"/>
    </source>
</evidence>
<evidence type="ECO:0000255" key="2"/>
<evidence type="ECO:0000305" key="3"/>
<keyword id="KW-0997">Cell inner membrane</keyword>
<keyword id="KW-1003">Cell membrane</keyword>
<keyword id="KW-0472">Membrane</keyword>
<keyword id="KW-1185">Reference proteome</keyword>
<keyword id="KW-1277">Toxin-antitoxin system</keyword>
<keyword id="KW-0812">Transmembrane</keyword>
<keyword id="KW-1133">Transmembrane helix</keyword>
<organism>
    <name type="scientific">Escherichia coli O157:H7</name>
    <dbReference type="NCBI Taxonomy" id="83334"/>
    <lineage>
        <taxon>Bacteria</taxon>
        <taxon>Pseudomonadati</taxon>
        <taxon>Pseudomonadota</taxon>
        <taxon>Gammaproteobacteria</taxon>
        <taxon>Enterobacterales</taxon>
        <taxon>Enterobacteriaceae</taxon>
        <taxon>Escherichia</taxon>
    </lineage>
</organism>
<accession>Q8X7U9</accession>
<accession>Q7AB93</accession>
<proteinExistence type="inferred from homology"/>
<feature type="chain" id="PRO_0000199041" description="Putative protein HokG">
    <location>
        <begin position="1"/>
        <end position="50"/>
    </location>
</feature>
<feature type="transmembrane region" description="Helical" evidence="2">
    <location>
        <begin position="5"/>
        <end position="25"/>
    </location>
</feature>
<reference key="1">
    <citation type="journal article" date="2001" name="Nature">
        <title>Genome sequence of enterohaemorrhagic Escherichia coli O157:H7.</title>
        <authorList>
            <person name="Perna N.T."/>
            <person name="Plunkett G. III"/>
            <person name="Burland V."/>
            <person name="Mau B."/>
            <person name="Glasner J.D."/>
            <person name="Rose D.J."/>
            <person name="Mayhew G.F."/>
            <person name="Evans P.S."/>
            <person name="Gregor J."/>
            <person name="Kirkpatrick H.A."/>
            <person name="Posfai G."/>
            <person name="Hackett J."/>
            <person name="Klink S."/>
            <person name="Boutin A."/>
            <person name="Shao Y."/>
            <person name="Miller L."/>
            <person name="Grotbeck E.J."/>
            <person name="Davis N.W."/>
            <person name="Lim A."/>
            <person name="Dimalanta E.T."/>
            <person name="Potamousis K."/>
            <person name="Apodaca J."/>
            <person name="Anantharaman T.S."/>
            <person name="Lin J."/>
            <person name="Yen G."/>
            <person name="Schwartz D.C."/>
            <person name="Welch R.A."/>
            <person name="Blattner F.R."/>
        </authorList>
    </citation>
    <scope>NUCLEOTIDE SEQUENCE [LARGE SCALE GENOMIC DNA]</scope>
    <source>
        <strain>O157:H7 / EDL933 / ATCC 700927 / EHEC</strain>
    </source>
</reference>
<reference key="2">
    <citation type="journal article" date="2001" name="DNA Res.">
        <title>Complete genome sequence of enterohemorrhagic Escherichia coli O157:H7 and genomic comparison with a laboratory strain K-12.</title>
        <authorList>
            <person name="Hayashi T."/>
            <person name="Makino K."/>
            <person name="Ohnishi M."/>
            <person name="Kurokawa K."/>
            <person name="Ishii K."/>
            <person name="Yokoyama K."/>
            <person name="Han C.-G."/>
            <person name="Ohtsubo E."/>
            <person name="Nakayama K."/>
            <person name="Murata T."/>
            <person name="Tanaka M."/>
            <person name="Tobe T."/>
            <person name="Iida T."/>
            <person name="Takami H."/>
            <person name="Honda T."/>
            <person name="Sasakawa C."/>
            <person name="Ogasawara N."/>
            <person name="Yasunaga T."/>
            <person name="Kuhara S."/>
            <person name="Shiba T."/>
            <person name="Hattori M."/>
            <person name="Shinagawa H."/>
        </authorList>
    </citation>
    <scope>NUCLEOTIDE SEQUENCE [LARGE SCALE GENOMIC DNA]</scope>
    <source>
        <strain>O157:H7 / Sakai / RIMD 0509952 / EHEC</strain>
    </source>
</reference>
<dbReference type="EMBL" id="AE005174">
    <property type="protein sequence ID" value="AAG57869.1"/>
    <property type="molecule type" value="Genomic_DNA"/>
</dbReference>
<dbReference type="EMBL" id="BA000007">
    <property type="protein sequence ID" value="BAB37039.1"/>
    <property type="molecule type" value="Genomic_DNA"/>
</dbReference>
<dbReference type="PIR" id="A85926">
    <property type="entry name" value="A85926"/>
</dbReference>
<dbReference type="PIR" id="H91080">
    <property type="entry name" value="H91080"/>
</dbReference>
<dbReference type="RefSeq" id="WP_000956458.1">
    <property type="nucleotide sequence ID" value="NZ_VOAI01000003.1"/>
</dbReference>
<dbReference type="SMR" id="Q8X7U9"/>
<dbReference type="STRING" id="155864.Z4071"/>
<dbReference type="KEGG" id="ece:Z4071"/>
<dbReference type="KEGG" id="ecs:ECs_3616"/>
<dbReference type="PATRIC" id="fig|386585.9.peg.3780"/>
<dbReference type="HOGENOM" id="CLU_177638_3_2_6"/>
<dbReference type="Proteomes" id="UP000000558">
    <property type="component" value="Chromosome"/>
</dbReference>
<dbReference type="Proteomes" id="UP000002519">
    <property type="component" value="Chromosome"/>
</dbReference>
<dbReference type="GO" id="GO:0005886">
    <property type="term" value="C:plasma membrane"/>
    <property type="evidence" value="ECO:0007669"/>
    <property type="project" value="UniProtKB-SubCell"/>
</dbReference>
<dbReference type="InterPro" id="IPR000021">
    <property type="entry name" value="Hok/gef_toxin"/>
</dbReference>
<dbReference type="Pfam" id="PF01848">
    <property type="entry name" value="HOK_GEF"/>
    <property type="match status" value="1"/>
</dbReference>
<dbReference type="PRINTS" id="PR00281">
    <property type="entry name" value="HOKGEFTOXIC"/>
</dbReference>
<gene>
    <name type="primary">hokG</name>
    <name type="ordered locus">Z4071</name>
    <name type="ordered locus">ECs3616</name>
</gene>
<sequence length="50" mass="5559">MLTKYALVAIIVLCCTVLGFTLMVGDSLCELSIRERGMEFKAVLAYESKK</sequence>